<gene>
    <name evidence="1" type="primary">secA</name>
    <name type="ordered locus">SYNW0086</name>
</gene>
<protein>
    <recommendedName>
        <fullName evidence="1">Protein translocase subunit SecA</fullName>
        <ecNumber evidence="1">7.4.2.8</ecNumber>
    </recommendedName>
</protein>
<reference key="1">
    <citation type="journal article" date="2003" name="Nature">
        <title>The genome of a motile marine Synechococcus.</title>
        <authorList>
            <person name="Palenik B."/>
            <person name="Brahamsha B."/>
            <person name="Larimer F.W."/>
            <person name="Land M.L."/>
            <person name="Hauser L."/>
            <person name="Chain P."/>
            <person name="Lamerdin J.E."/>
            <person name="Regala W."/>
            <person name="Allen E.E."/>
            <person name="McCarren J."/>
            <person name="Paulsen I.T."/>
            <person name="Dufresne A."/>
            <person name="Partensky F."/>
            <person name="Webb E.A."/>
            <person name="Waterbury J."/>
        </authorList>
    </citation>
    <scope>NUCLEOTIDE SEQUENCE [LARGE SCALE GENOMIC DNA]</scope>
    <source>
        <strain>WH8102</strain>
    </source>
</reference>
<evidence type="ECO:0000255" key="1">
    <source>
        <dbReference type="HAMAP-Rule" id="MF_01382"/>
    </source>
</evidence>
<sequence length="937" mass="105841">MLKLLLGDPNARKLKRYQPIVSDINLLEEDIFPLSDDALRDKTAAFQEQLASAGSLENQRPILDEILPEAFAVVREAGKRVLGMRHFDVQLIGGMVLHEGQIAEMKTGEGKTLVATLPSYLNALTGRGVHVVTVNDYLARRDAEWMGQVHRFLGLSVGLIQQDMRPEERRRNYNCDITYATNSELGFDYLRDNMAADISEVVQREFQYCVIDEVDSILIDEARTPLIISGQVQRPQEKYQQAAQVAQALTRAAEMGKDGIDPEGDYEVDEKQRSCTLTDEGFAKAEQMLGVQDLFDPQDPWAHYITNALKAKDLFVKDVNYIVRDGEAVIVDEFTGRVMPGRRWSDGQHQAIEAKEALPIQAETQTLASITYQNFFLLYPRLAGMTGTAKTEEVEFEKTYKLETTIVPTNRVRARQDWPDQVYKTETAKWRAVANETVDIHKNGRPVLVGTTSVEKSELLSALLAEQEIPHNLLNAKPENVERESEIVAQAGRAGAVTIATNMAGRGTDIILGGNSDYMARLKLREVLLGRLVKPEENHKPPVPLQRNAAAGFSEAPTASATPSRDSLYPCVLTDDTDQTLAQLARDLVKAWGDRALTLIELEERIATAAEKAPTDDPNIQALRAATARVKGEFDAVVKQEEQRVREAGGLHVIGTERHESRRVDNQLRGRAGRQGDPGSTRFFLSLGDNLLRIFGGDRVAGLMNAFRVEEDMPIESGMLTRSLEGAQKKVETYYYDIRKQVFEYDEVMNNQRRAVYSERRRVLDGRALKKQVIGYGERTMNEIVEAYVNPDLPPEEWDTAQLVAKVKEFVYLLEDLTPEQVQGLGMDELKAFLQEQLRNAYDIKEGQVEQQRPGLMREAERFFILQQIDTLWREHLQAMDALRESVGLRGYGQKDPLIEYKNEGYDMFLEMMTNMRRNVIYSMFMFQPAAPQQSQV</sequence>
<keyword id="KW-0067">ATP-binding</keyword>
<keyword id="KW-0997">Cell inner membrane</keyword>
<keyword id="KW-1003">Cell membrane</keyword>
<keyword id="KW-0963">Cytoplasm</keyword>
<keyword id="KW-0472">Membrane</keyword>
<keyword id="KW-0547">Nucleotide-binding</keyword>
<keyword id="KW-0653">Protein transport</keyword>
<keyword id="KW-0793">Thylakoid</keyword>
<keyword id="KW-1278">Translocase</keyword>
<keyword id="KW-0811">Translocation</keyword>
<keyword id="KW-0813">Transport</keyword>
<feature type="chain" id="PRO_0000318475" description="Protein translocase subunit SecA">
    <location>
        <begin position="1"/>
        <end position="937"/>
    </location>
</feature>
<feature type="binding site" evidence="1">
    <location>
        <position position="90"/>
    </location>
    <ligand>
        <name>ATP</name>
        <dbReference type="ChEBI" id="CHEBI:30616"/>
    </ligand>
</feature>
<feature type="binding site" evidence="1">
    <location>
        <begin position="108"/>
        <end position="112"/>
    </location>
    <ligand>
        <name>ATP</name>
        <dbReference type="ChEBI" id="CHEBI:30616"/>
    </ligand>
</feature>
<feature type="binding site" evidence="1">
    <location>
        <position position="509"/>
    </location>
    <ligand>
        <name>ATP</name>
        <dbReference type="ChEBI" id="CHEBI:30616"/>
    </ligand>
</feature>
<proteinExistence type="inferred from homology"/>
<dbReference type="EC" id="7.4.2.8" evidence="1"/>
<dbReference type="EMBL" id="BX569689">
    <property type="protein sequence ID" value="CAE06601.1"/>
    <property type="molecule type" value="Genomic_DNA"/>
</dbReference>
<dbReference type="RefSeq" id="WP_011126964.1">
    <property type="nucleotide sequence ID" value="NC_005070.1"/>
</dbReference>
<dbReference type="SMR" id="Q7UA15"/>
<dbReference type="STRING" id="84588.SYNW0086"/>
<dbReference type="KEGG" id="syw:SYNW0086"/>
<dbReference type="eggNOG" id="COG0653">
    <property type="taxonomic scope" value="Bacteria"/>
</dbReference>
<dbReference type="HOGENOM" id="CLU_005314_3_0_3"/>
<dbReference type="Proteomes" id="UP000001422">
    <property type="component" value="Chromosome"/>
</dbReference>
<dbReference type="GO" id="GO:0031522">
    <property type="term" value="C:cell envelope Sec protein transport complex"/>
    <property type="evidence" value="ECO:0007669"/>
    <property type="project" value="TreeGrafter"/>
</dbReference>
<dbReference type="GO" id="GO:0005829">
    <property type="term" value="C:cytosol"/>
    <property type="evidence" value="ECO:0007669"/>
    <property type="project" value="TreeGrafter"/>
</dbReference>
<dbReference type="GO" id="GO:0031676">
    <property type="term" value="C:plasma membrane-derived thylakoid membrane"/>
    <property type="evidence" value="ECO:0007669"/>
    <property type="project" value="UniProtKB-SubCell"/>
</dbReference>
<dbReference type="GO" id="GO:0005524">
    <property type="term" value="F:ATP binding"/>
    <property type="evidence" value="ECO:0007669"/>
    <property type="project" value="UniProtKB-UniRule"/>
</dbReference>
<dbReference type="GO" id="GO:0008564">
    <property type="term" value="F:protein-exporting ATPase activity"/>
    <property type="evidence" value="ECO:0007669"/>
    <property type="project" value="UniProtKB-EC"/>
</dbReference>
<dbReference type="GO" id="GO:0065002">
    <property type="term" value="P:intracellular protein transmembrane transport"/>
    <property type="evidence" value="ECO:0007669"/>
    <property type="project" value="UniProtKB-UniRule"/>
</dbReference>
<dbReference type="GO" id="GO:0017038">
    <property type="term" value="P:protein import"/>
    <property type="evidence" value="ECO:0007669"/>
    <property type="project" value="InterPro"/>
</dbReference>
<dbReference type="GO" id="GO:0006605">
    <property type="term" value="P:protein targeting"/>
    <property type="evidence" value="ECO:0007669"/>
    <property type="project" value="UniProtKB-UniRule"/>
</dbReference>
<dbReference type="GO" id="GO:0043952">
    <property type="term" value="P:protein transport by the Sec complex"/>
    <property type="evidence" value="ECO:0007669"/>
    <property type="project" value="TreeGrafter"/>
</dbReference>
<dbReference type="CDD" id="cd17928">
    <property type="entry name" value="DEXDc_SecA"/>
    <property type="match status" value="1"/>
</dbReference>
<dbReference type="CDD" id="cd18803">
    <property type="entry name" value="SF2_C_secA"/>
    <property type="match status" value="1"/>
</dbReference>
<dbReference type="FunFam" id="3.90.1440.10:FF:000003">
    <property type="entry name" value="Preprotein translocase SecA subunit"/>
    <property type="match status" value="1"/>
</dbReference>
<dbReference type="FunFam" id="3.40.50.300:FF:000429">
    <property type="entry name" value="Preprotein translocase subunit SecA"/>
    <property type="match status" value="1"/>
</dbReference>
<dbReference type="FunFam" id="1.10.3060.10:FF:000003">
    <property type="entry name" value="Protein translocase subunit SecA"/>
    <property type="match status" value="1"/>
</dbReference>
<dbReference type="FunFam" id="3.40.50.300:FF:000334">
    <property type="entry name" value="Protein translocase subunit SecA"/>
    <property type="match status" value="1"/>
</dbReference>
<dbReference type="Gene3D" id="1.10.3060.10">
    <property type="entry name" value="Helical scaffold and wing domains of SecA"/>
    <property type="match status" value="1"/>
</dbReference>
<dbReference type="Gene3D" id="3.40.50.300">
    <property type="entry name" value="P-loop containing nucleotide triphosphate hydrolases"/>
    <property type="match status" value="2"/>
</dbReference>
<dbReference type="Gene3D" id="3.90.1440.10">
    <property type="entry name" value="SecA, preprotein cross-linking domain"/>
    <property type="match status" value="1"/>
</dbReference>
<dbReference type="HAMAP" id="MF_01382">
    <property type="entry name" value="SecA"/>
    <property type="match status" value="1"/>
</dbReference>
<dbReference type="InterPro" id="IPR014001">
    <property type="entry name" value="Helicase_ATP-bd"/>
</dbReference>
<dbReference type="InterPro" id="IPR027417">
    <property type="entry name" value="P-loop_NTPase"/>
</dbReference>
<dbReference type="InterPro" id="IPR000185">
    <property type="entry name" value="SecA"/>
</dbReference>
<dbReference type="InterPro" id="IPR020937">
    <property type="entry name" value="SecA_CS"/>
</dbReference>
<dbReference type="InterPro" id="IPR011115">
    <property type="entry name" value="SecA_DEAD"/>
</dbReference>
<dbReference type="InterPro" id="IPR014018">
    <property type="entry name" value="SecA_motor_DEAD"/>
</dbReference>
<dbReference type="InterPro" id="IPR011130">
    <property type="entry name" value="SecA_preprotein_X-link_dom"/>
</dbReference>
<dbReference type="InterPro" id="IPR044722">
    <property type="entry name" value="SecA_SF2_C"/>
</dbReference>
<dbReference type="InterPro" id="IPR011116">
    <property type="entry name" value="SecA_Wing/Scaffold"/>
</dbReference>
<dbReference type="InterPro" id="IPR036266">
    <property type="entry name" value="SecA_Wing/Scaffold_sf"/>
</dbReference>
<dbReference type="InterPro" id="IPR036670">
    <property type="entry name" value="SecA_X-link_sf"/>
</dbReference>
<dbReference type="NCBIfam" id="TIGR00963">
    <property type="entry name" value="secA"/>
    <property type="match status" value="1"/>
</dbReference>
<dbReference type="PANTHER" id="PTHR30612:SF0">
    <property type="entry name" value="CHLOROPLAST PROTEIN-TRANSPORTING ATPASE"/>
    <property type="match status" value="1"/>
</dbReference>
<dbReference type="PANTHER" id="PTHR30612">
    <property type="entry name" value="SECA INNER MEMBRANE COMPONENT OF SEC PROTEIN SECRETION SYSTEM"/>
    <property type="match status" value="1"/>
</dbReference>
<dbReference type="Pfam" id="PF21090">
    <property type="entry name" value="P-loop_SecA"/>
    <property type="match status" value="1"/>
</dbReference>
<dbReference type="Pfam" id="PF07517">
    <property type="entry name" value="SecA_DEAD"/>
    <property type="match status" value="1"/>
</dbReference>
<dbReference type="Pfam" id="PF01043">
    <property type="entry name" value="SecA_PP_bind"/>
    <property type="match status" value="1"/>
</dbReference>
<dbReference type="Pfam" id="PF07516">
    <property type="entry name" value="SecA_SW"/>
    <property type="match status" value="1"/>
</dbReference>
<dbReference type="PRINTS" id="PR00906">
    <property type="entry name" value="SECA"/>
</dbReference>
<dbReference type="SMART" id="SM00957">
    <property type="entry name" value="SecA_DEAD"/>
    <property type="match status" value="1"/>
</dbReference>
<dbReference type="SMART" id="SM00958">
    <property type="entry name" value="SecA_PP_bind"/>
    <property type="match status" value="1"/>
</dbReference>
<dbReference type="SUPFAM" id="SSF81886">
    <property type="entry name" value="Helical scaffold and wing domains of SecA"/>
    <property type="match status" value="1"/>
</dbReference>
<dbReference type="SUPFAM" id="SSF52540">
    <property type="entry name" value="P-loop containing nucleoside triphosphate hydrolases"/>
    <property type="match status" value="2"/>
</dbReference>
<dbReference type="SUPFAM" id="SSF81767">
    <property type="entry name" value="Pre-protein crosslinking domain of SecA"/>
    <property type="match status" value="1"/>
</dbReference>
<dbReference type="PROSITE" id="PS01312">
    <property type="entry name" value="SECA"/>
    <property type="match status" value="1"/>
</dbReference>
<dbReference type="PROSITE" id="PS51196">
    <property type="entry name" value="SECA_MOTOR_DEAD"/>
    <property type="match status" value="1"/>
</dbReference>
<organism>
    <name type="scientific">Parasynechococcus marenigrum (strain WH8102)</name>
    <dbReference type="NCBI Taxonomy" id="84588"/>
    <lineage>
        <taxon>Bacteria</taxon>
        <taxon>Bacillati</taxon>
        <taxon>Cyanobacteriota</taxon>
        <taxon>Cyanophyceae</taxon>
        <taxon>Synechococcales</taxon>
        <taxon>Prochlorococcaceae</taxon>
        <taxon>Parasynechococcus</taxon>
        <taxon>Parasynechococcus marenigrum</taxon>
    </lineage>
</organism>
<comment type="function">
    <text evidence="1">Part of the Sec protein translocase complex. Interacts with the SecYEG preprotein conducting channel. Has a central role in coupling the hydrolysis of ATP to the transfer of proteins into and across the cell membrane, serving as an ATP-driven molecular motor driving the stepwise translocation of polypeptide chains across the membrane.</text>
</comment>
<comment type="function">
    <text evidence="1">Probably participates in protein translocation into and across both the cytoplasmic and thylakoid membranes in cyanobacterial cells.</text>
</comment>
<comment type="catalytic activity">
    <reaction evidence="1">
        <text>ATP + H2O + cellular proteinSide 1 = ADP + phosphate + cellular proteinSide 2.</text>
        <dbReference type="EC" id="7.4.2.8"/>
    </reaction>
</comment>
<comment type="subunit">
    <text evidence="1">Monomer and homodimer. Part of the essential Sec protein translocation apparatus which comprises SecA, SecYEG and auxiliary proteins SecDF. Other proteins may also be involved.</text>
</comment>
<comment type="subcellular location">
    <subcellularLocation>
        <location evidence="1">Cell inner membrane</location>
        <topology evidence="1">Peripheral membrane protein</topology>
        <orientation evidence="1">Cytoplasmic side</orientation>
    </subcellularLocation>
    <subcellularLocation>
        <location evidence="1">Cellular thylakoid membrane</location>
        <topology evidence="1">Peripheral membrane protein</topology>
        <orientation evidence="1">Cytoplasmic side</orientation>
    </subcellularLocation>
    <subcellularLocation>
        <location evidence="1">Cytoplasm</location>
    </subcellularLocation>
</comment>
<comment type="similarity">
    <text evidence="1">Belongs to the SecA family.</text>
</comment>
<name>SECA_PARMW</name>
<accession>Q7UA15</accession>